<protein>
    <recommendedName>
        <fullName evidence="1">Acetyl-coenzyme A carboxylase carboxyl transferase subunit beta</fullName>
        <shortName evidence="1">ACCase subunit beta</shortName>
        <shortName evidence="1">Acetyl-CoA carboxylase carboxyltransferase subunit beta</shortName>
        <ecNumber evidence="1">2.1.3.15</ecNumber>
    </recommendedName>
</protein>
<organism>
    <name type="scientific">Exiguobacterium sp. (strain ATCC BAA-1283 / AT1b)</name>
    <dbReference type="NCBI Taxonomy" id="360911"/>
    <lineage>
        <taxon>Bacteria</taxon>
        <taxon>Bacillati</taxon>
        <taxon>Bacillota</taxon>
        <taxon>Bacilli</taxon>
        <taxon>Bacillales</taxon>
        <taxon>Bacillales Family XII. Incertae Sedis</taxon>
        <taxon>Exiguobacterium</taxon>
    </lineage>
</organism>
<gene>
    <name evidence="1" type="primary">accD</name>
    <name type="ordered locus">EAT1b_0672</name>
</gene>
<evidence type="ECO:0000255" key="1">
    <source>
        <dbReference type="HAMAP-Rule" id="MF_01395"/>
    </source>
</evidence>
<evidence type="ECO:0000255" key="2">
    <source>
        <dbReference type="PROSITE-ProRule" id="PRU01136"/>
    </source>
</evidence>
<proteinExistence type="inferred from homology"/>
<accession>C4L481</accession>
<dbReference type="EC" id="2.1.3.15" evidence="1"/>
<dbReference type="EMBL" id="CP001615">
    <property type="protein sequence ID" value="ACQ69603.1"/>
    <property type="molecule type" value="Genomic_DNA"/>
</dbReference>
<dbReference type="RefSeq" id="WP_012726722.1">
    <property type="nucleotide sequence ID" value="NC_012673.1"/>
</dbReference>
<dbReference type="SMR" id="C4L481"/>
<dbReference type="STRING" id="360911.EAT1b_0672"/>
<dbReference type="KEGG" id="eat:EAT1b_0672"/>
<dbReference type="eggNOG" id="COG0777">
    <property type="taxonomic scope" value="Bacteria"/>
</dbReference>
<dbReference type="HOGENOM" id="CLU_015486_1_1_9"/>
<dbReference type="OrthoDB" id="9772975at2"/>
<dbReference type="UniPathway" id="UPA00655">
    <property type="reaction ID" value="UER00711"/>
</dbReference>
<dbReference type="Proteomes" id="UP000000716">
    <property type="component" value="Chromosome"/>
</dbReference>
<dbReference type="GO" id="GO:0009317">
    <property type="term" value="C:acetyl-CoA carboxylase complex"/>
    <property type="evidence" value="ECO:0007669"/>
    <property type="project" value="InterPro"/>
</dbReference>
<dbReference type="GO" id="GO:0003989">
    <property type="term" value="F:acetyl-CoA carboxylase activity"/>
    <property type="evidence" value="ECO:0007669"/>
    <property type="project" value="InterPro"/>
</dbReference>
<dbReference type="GO" id="GO:0005524">
    <property type="term" value="F:ATP binding"/>
    <property type="evidence" value="ECO:0007669"/>
    <property type="project" value="UniProtKB-KW"/>
</dbReference>
<dbReference type="GO" id="GO:0016743">
    <property type="term" value="F:carboxyl- or carbamoyltransferase activity"/>
    <property type="evidence" value="ECO:0007669"/>
    <property type="project" value="UniProtKB-UniRule"/>
</dbReference>
<dbReference type="GO" id="GO:0008270">
    <property type="term" value="F:zinc ion binding"/>
    <property type="evidence" value="ECO:0007669"/>
    <property type="project" value="UniProtKB-UniRule"/>
</dbReference>
<dbReference type="GO" id="GO:0006633">
    <property type="term" value="P:fatty acid biosynthetic process"/>
    <property type="evidence" value="ECO:0007669"/>
    <property type="project" value="UniProtKB-KW"/>
</dbReference>
<dbReference type="GO" id="GO:2001295">
    <property type="term" value="P:malonyl-CoA biosynthetic process"/>
    <property type="evidence" value="ECO:0007669"/>
    <property type="project" value="UniProtKB-UniRule"/>
</dbReference>
<dbReference type="Gene3D" id="3.90.226.10">
    <property type="entry name" value="2-enoyl-CoA Hydratase, Chain A, domain 1"/>
    <property type="match status" value="1"/>
</dbReference>
<dbReference type="HAMAP" id="MF_01395">
    <property type="entry name" value="AcetylCoA_CT_beta"/>
    <property type="match status" value="1"/>
</dbReference>
<dbReference type="InterPro" id="IPR034733">
    <property type="entry name" value="AcCoA_carboxyl_beta"/>
</dbReference>
<dbReference type="InterPro" id="IPR000438">
    <property type="entry name" value="Acetyl_CoA_COase_Trfase_b_su"/>
</dbReference>
<dbReference type="InterPro" id="IPR029045">
    <property type="entry name" value="ClpP/crotonase-like_dom_sf"/>
</dbReference>
<dbReference type="InterPro" id="IPR011762">
    <property type="entry name" value="COA_CT_N"/>
</dbReference>
<dbReference type="NCBIfam" id="TIGR00515">
    <property type="entry name" value="accD"/>
    <property type="match status" value="1"/>
</dbReference>
<dbReference type="PANTHER" id="PTHR42995">
    <property type="entry name" value="ACETYL-COENZYME A CARBOXYLASE CARBOXYL TRANSFERASE SUBUNIT BETA, CHLOROPLASTIC"/>
    <property type="match status" value="1"/>
</dbReference>
<dbReference type="PANTHER" id="PTHR42995:SF5">
    <property type="entry name" value="ACETYL-COENZYME A CARBOXYLASE CARBOXYL TRANSFERASE SUBUNIT BETA, CHLOROPLASTIC"/>
    <property type="match status" value="1"/>
</dbReference>
<dbReference type="Pfam" id="PF01039">
    <property type="entry name" value="Carboxyl_trans"/>
    <property type="match status" value="1"/>
</dbReference>
<dbReference type="PRINTS" id="PR01070">
    <property type="entry name" value="ACCCTRFRASEB"/>
</dbReference>
<dbReference type="SUPFAM" id="SSF52096">
    <property type="entry name" value="ClpP/crotonase"/>
    <property type="match status" value="1"/>
</dbReference>
<dbReference type="PROSITE" id="PS50980">
    <property type="entry name" value="COA_CT_NTER"/>
    <property type="match status" value="1"/>
</dbReference>
<feature type="chain" id="PRO_0000389741" description="Acetyl-coenzyme A carboxylase carboxyl transferase subunit beta">
    <location>
        <begin position="1"/>
        <end position="284"/>
    </location>
</feature>
<feature type="domain" description="CoA carboxyltransferase N-terminal" evidence="2">
    <location>
        <begin position="27"/>
        <end position="284"/>
    </location>
</feature>
<feature type="zinc finger region" description="C4-type" evidence="1">
    <location>
        <begin position="31"/>
        <end position="52"/>
    </location>
</feature>
<feature type="binding site" evidence="1">
    <location>
        <position position="31"/>
    </location>
    <ligand>
        <name>Zn(2+)</name>
        <dbReference type="ChEBI" id="CHEBI:29105"/>
    </ligand>
</feature>
<feature type="binding site" evidence="1">
    <location>
        <position position="34"/>
    </location>
    <ligand>
        <name>Zn(2+)</name>
        <dbReference type="ChEBI" id="CHEBI:29105"/>
    </ligand>
</feature>
<feature type="binding site" evidence="1">
    <location>
        <position position="50"/>
    </location>
    <ligand>
        <name>Zn(2+)</name>
        <dbReference type="ChEBI" id="CHEBI:29105"/>
    </ligand>
</feature>
<feature type="binding site" evidence="1">
    <location>
        <position position="52"/>
    </location>
    <ligand>
        <name>Zn(2+)</name>
        <dbReference type="ChEBI" id="CHEBI:29105"/>
    </ligand>
</feature>
<comment type="function">
    <text evidence="1">Component of the acetyl coenzyme A carboxylase (ACC) complex. Biotin carboxylase (BC) catalyzes the carboxylation of biotin on its carrier protein (BCCP) and then the CO(2) group is transferred by the transcarboxylase to acetyl-CoA to form malonyl-CoA.</text>
</comment>
<comment type="catalytic activity">
    <reaction evidence="1">
        <text>N(6)-carboxybiotinyl-L-lysyl-[protein] + acetyl-CoA = N(6)-biotinyl-L-lysyl-[protein] + malonyl-CoA</text>
        <dbReference type="Rhea" id="RHEA:54728"/>
        <dbReference type="Rhea" id="RHEA-COMP:10505"/>
        <dbReference type="Rhea" id="RHEA-COMP:10506"/>
        <dbReference type="ChEBI" id="CHEBI:57288"/>
        <dbReference type="ChEBI" id="CHEBI:57384"/>
        <dbReference type="ChEBI" id="CHEBI:83144"/>
        <dbReference type="ChEBI" id="CHEBI:83145"/>
        <dbReference type="EC" id="2.1.3.15"/>
    </reaction>
</comment>
<comment type="cofactor">
    <cofactor evidence="1">
        <name>Zn(2+)</name>
        <dbReference type="ChEBI" id="CHEBI:29105"/>
    </cofactor>
    <text evidence="1">Binds 1 zinc ion per subunit.</text>
</comment>
<comment type="pathway">
    <text evidence="1">Lipid metabolism; malonyl-CoA biosynthesis; malonyl-CoA from acetyl-CoA: step 1/1.</text>
</comment>
<comment type="subunit">
    <text evidence="1">Acetyl-CoA carboxylase is a heterohexamer composed of biotin carboxyl carrier protein (AccB), biotin carboxylase (AccC) and two subunits each of ACCase subunit alpha (AccA) and ACCase subunit beta (AccD).</text>
</comment>
<comment type="subcellular location">
    <subcellularLocation>
        <location evidence="1">Cytoplasm</location>
    </subcellularLocation>
</comment>
<comment type="similarity">
    <text evidence="1">Belongs to the AccD/PCCB family.</text>
</comment>
<keyword id="KW-0067">ATP-binding</keyword>
<keyword id="KW-0963">Cytoplasm</keyword>
<keyword id="KW-0275">Fatty acid biosynthesis</keyword>
<keyword id="KW-0276">Fatty acid metabolism</keyword>
<keyword id="KW-0444">Lipid biosynthesis</keyword>
<keyword id="KW-0443">Lipid metabolism</keyword>
<keyword id="KW-0479">Metal-binding</keyword>
<keyword id="KW-0547">Nucleotide-binding</keyword>
<keyword id="KW-0808">Transferase</keyword>
<keyword id="KW-0862">Zinc</keyword>
<keyword id="KW-0863">Zinc-finger</keyword>
<reference key="1">
    <citation type="journal article" date="2011" name="J. Bacteriol.">
        <title>Complete genome sequence of the Thermophilic Bacterium Exiguobacterium sp. AT1b.</title>
        <authorList>
            <person name="Vishnivetskaya T.A."/>
            <person name="Lucas S."/>
            <person name="Copeland A."/>
            <person name="Lapidus A."/>
            <person name="Glavina del Rio T."/>
            <person name="Dalin E."/>
            <person name="Tice H."/>
            <person name="Bruce D.C."/>
            <person name="Goodwin L.A."/>
            <person name="Pitluck S."/>
            <person name="Saunders E."/>
            <person name="Brettin T."/>
            <person name="Detter C."/>
            <person name="Han C."/>
            <person name="Larimer F."/>
            <person name="Land M.L."/>
            <person name="Hauser L.J."/>
            <person name="Kyrpides N.C."/>
            <person name="Ovchinnikova G."/>
            <person name="Kathariou S."/>
            <person name="Ramaley R.F."/>
            <person name="Rodrigues D.F."/>
            <person name="Hendrix C."/>
            <person name="Richardson P."/>
            <person name="Tiedje J.M."/>
        </authorList>
    </citation>
    <scope>NUCLEOTIDE SEQUENCE [LARGE SCALE GENOMIC DNA]</scope>
    <source>
        <strain>ATCC BAA-1283 / AT1b</strain>
    </source>
</reference>
<name>ACCD_EXISA</name>
<sequence>MTAFFKKPKRYMPLRQREPKIDAPQGLMTKCPSCKYMHYTKQLNENHKVCDCGYHFPLHAQERIDMLVDEGSFERFAGPSVKANPLDFPDYEEKLTKDRKRTGIEEAVVCGKATIDGLPLVVCVMDARFRMGSMGAYVGEAIASAVRTATSLGLPVVLFTASGGARMQEGMVSLMQMANTSIALKEHDEAGLLYIAYLTHPTTGGVSASFAMLGDLNVAEPGALIGFAGRRIIEQTIREKLPENFQTAEFLLESGQLDAVIHREQMRSFLKKMIELHDGGVRHV</sequence>